<dbReference type="EMBL" id="CP000408">
    <property type="protein sequence ID" value="ABP92872.1"/>
    <property type="molecule type" value="Genomic_DNA"/>
</dbReference>
<dbReference type="SMR" id="A4W3D3"/>
<dbReference type="KEGG" id="ssv:SSU98_1714"/>
<dbReference type="HOGENOM" id="CLU_1128554_0_0_9"/>
<dbReference type="BioCyc" id="SSUI391296:GI2E-1770-MONOMER"/>
<dbReference type="GO" id="GO:0005737">
    <property type="term" value="C:cytoplasm"/>
    <property type="evidence" value="ECO:0007669"/>
    <property type="project" value="UniProtKB-SubCell"/>
</dbReference>
<dbReference type="GO" id="GO:0003677">
    <property type="term" value="F:DNA binding"/>
    <property type="evidence" value="ECO:0007669"/>
    <property type="project" value="UniProtKB-KW"/>
</dbReference>
<dbReference type="GO" id="GO:0009037">
    <property type="term" value="F:tyrosine-based site-specific recombinase activity"/>
    <property type="evidence" value="ECO:0007669"/>
    <property type="project" value="UniProtKB-UniRule"/>
</dbReference>
<dbReference type="GO" id="GO:0006313">
    <property type="term" value="P:DNA transposition"/>
    <property type="evidence" value="ECO:0007669"/>
    <property type="project" value="UniProtKB-UniRule"/>
</dbReference>
<dbReference type="CDD" id="cd01190">
    <property type="entry name" value="INT_StrepXerD_C_like"/>
    <property type="match status" value="1"/>
</dbReference>
<dbReference type="Gene3D" id="1.10.150.130">
    <property type="match status" value="1"/>
</dbReference>
<dbReference type="Gene3D" id="1.10.443.10">
    <property type="entry name" value="Intergrase catalytic core"/>
    <property type="match status" value="1"/>
</dbReference>
<dbReference type="HAMAP" id="MF_01817">
    <property type="entry name" value="Recomb_XerD_like"/>
    <property type="match status" value="1"/>
</dbReference>
<dbReference type="InterPro" id="IPR044068">
    <property type="entry name" value="CB"/>
</dbReference>
<dbReference type="InterPro" id="IPR011010">
    <property type="entry name" value="DNA_brk_join_enz"/>
</dbReference>
<dbReference type="InterPro" id="IPR013762">
    <property type="entry name" value="Integrase-like_cat_sf"/>
</dbReference>
<dbReference type="InterPro" id="IPR002104">
    <property type="entry name" value="Integrase_catalytic"/>
</dbReference>
<dbReference type="InterPro" id="IPR010998">
    <property type="entry name" value="Integrase_recombinase_N"/>
</dbReference>
<dbReference type="InterPro" id="IPR020876">
    <property type="entry name" value="Tyrosine_recombinase_XerD-like"/>
</dbReference>
<dbReference type="NCBIfam" id="NF002685">
    <property type="entry name" value="PRK02436.1"/>
    <property type="match status" value="1"/>
</dbReference>
<dbReference type="Pfam" id="PF00589">
    <property type="entry name" value="Phage_integrase"/>
    <property type="match status" value="1"/>
</dbReference>
<dbReference type="SUPFAM" id="SSF56349">
    <property type="entry name" value="DNA breaking-rejoining enzymes"/>
    <property type="match status" value="1"/>
</dbReference>
<dbReference type="PROSITE" id="PS51900">
    <property type="entry name" value="CB"/>
    <property type="match status" value="1"/>
</dbReference>
<dbReference type="PROSITE" id="PS51898">
    <property type="entry name" value="TYR_RECOMBINASE"/>
    <property type="match status" value="1"/>
</dbReference>
<sequence length="243" mass="28098">MKQAIESFIQSKKVSVNSQKSYTYDLQQFVTVTKGEISQQSLLVYQQSLLDLKPAAQKRKMSAVNQFLYFLYENNLLDRFYKLQTTSGPASVKKKLEREDLTLLFQESPWLEGQLIALLIAYLGLTPSEIAELTSQQVNLDFQVLTVEKGGAKRVLTLPKELIPYMESHLSGRYVFDKKGQTYSRQWFFNRLTEFVQSIGKPDWTAQKLREQYILKQIDEGKSLDQIAKQLGLKTSMSLEKFR</sequence>
<keyword id="KW-0963">Cytoplasm</keyword>
<keyword id="KW-0229">DNA integration</keyword>
<keyword id="KW-0233">DNA recombination</keyword>
<keyword id="KW-0238">DNA-binding</keyword>
<comment type="function">
    <text evidence="1">Putative tyrosine recombinase. Not involved in the cutting and rejoining of the recombining DNA molecules on dif(SL) site.</text>
</comment>
<comment type="subcellular location">
    <subcellularLocation>
        <location evidence="1">Cytoplasm</location>
    </subcellularLocation>
</comment>
<comment type="similarity">
    <text evidence="1">Belongs to the 'phage' integrase family. XerD-like subfamily.</text>
</comment>
<organism>
    <name type="scientific">Streptococcus suis (strain 98HAH33)</name>
    <dbReference type="NCBI Taxonomy" id="391296"/>
    <lineage>
        <taxon>Bacteria</taxon>
        <taxon>Bacillati</taxon>
        <taxon>Bacillota</taxon>
        <taxon>Bacilli</taxon>
        <taxon>Lactobacillales</taxon>
        <taxon>Streptococcaceae</taxon>
        <taxon>Streptococcus</taxon>
    </lineage>
</organism>
<feature type="chain" id="PRO_0000355196" description="Tyrosine recombinase XerD-like">
    <location>
        <begin position="1"/>
        <end position="243"/>
    </location>
</feature>
<feature type="domain" description="Core-binding (CB)" evidence="3">
    <location>
        <begin position="1"/>
        <end position="72"/>
    </location>
</feature>
<feature type="domain" description="Tyr recombinase" evidence="2">
    <location>
        <begin position="91"/>
        <end position="243"/>
    </location>
</feature>
<feature type="active site" evidence="2">
    <location>
        <position position="149"/>
    </location>
</feature>
<feature type="active site" evidence="2">
    <location>
        <position position="210"/>
    </location>
</feature>
<gene>
    <name type="ordered locus">SSU98_1714</name>
</gene>
<name>XERDL_STRS2</name>
<protein>
    <recommendedName>
        <fullName evidence="1">Tyrosine recombinase XerD-like</fullName>
    </recommendedName>
</protein>
<reference key="1">
    <citation type="journal article" date="2007" name="PLoS ONE">
        <title>A glimpse of streptococcal toxic shock syndrome from comparative genomics of S. suis 2 Chinese isolates.</title>
        <authorList>
            <person name="Chen C."/>
            <person name="Tang J."/>
            <person name="Dong W."/>
            <person name="Wang C."/>
            <person name="Feng Y."/>
            <person name="Wang J."/>
            <person name="Zheng F."/>
            <person name="Pan X."/>
            <person name="Liu D."/>
            <person name="Li M."/>
            <person name="Song Y."/>
            <person name="Zhu X."/>
            <person name="Sun H."/>
            <person name="Feng T."/>
            <person name="Guo Z."/>
            <person name="Ju A."/>
            <person name="Ge J."/>
            <person name="Dong Y."/>
            <person name="Sun W."/>
            <person name="Jiang Y."/>
            <person name="Wang J."/>
            <person name="Yan J."/>
            <person name="Yang H."/>
            <person name="Wang X."/>
            <person name="Gao G.F."/>
            <person name="Yang R."/>
            <person name="Wang J."/>
            <person name="Yu J."/>
        </authorList>
    </citation>
    <scope>NUCLEOTIDE SEQUENCE [LARGE SCALE GENOMIC DNA]</scope>
    <source>
        <strain>98HAH33</strain>
    </source>
</reference>
<evidence type="ECO:0000255" key="1">
    <source>
        <dbReference type="HAMAP-Rule" id="MF_01817"/>
    </source>
</evidence>
<evidence type="ECO:0000255" key="2">
    <source>
        <dbReference type="PROSITE-ProRule" id="PRU01246"/>
    </source>
</evidence>
<evidence type="ECO:0000255" key="3">
    <source>
        <dbReference type="PROSITE-ProRule" id="PRU01248"/>
    </source>
</evidence>
<proteinExistence type="inferred from homology"/>
<accession>A4W3D3</accession>